<dbReference type="PDB" id="2ERI">
    <property type="method" value="NMR"/>
    <property type="chains" value="A=5-31"/>
</dbReference>
<dbReference type="PDBsum" id="2ERI"/>
<dbReference type="SMR" id="P56879"/>
<dbReference type="EvolutionaryTrace" id="P56879"/>
<dbReference type="GO" id="GO:0042742">
    <property type="term" value="P:defense response to bacterium"/>
    <property type="evidence" value="ECO:0007669"/>
    <property type="project" value="UniProtKB-KW"/>
</dbReference>
<dbReference type="InterPro" id="IPR005535">
    <property type="entry name" value="Cyclotide"/>
</dbReference>
<dbReference type="InterPro" id="IPR012323">
    <property type="entry name" value="Cyclotide_bracelet_CS"/>
</dbReference>
<dbReference type="InterPro" id="IPR036146">
    <property type="entry name" value="Cyclotide_sf"/>
</dbReference>
<dbReference type="Pfam" id="PF03784">
    <property type="entry name" value="Cyclotide"/>
    <property type="match status" value="1"/>
</dbReference>
<dbReference type="PIRSF" id="PIRSF037891">
    <property type="entry name" value="Cycloviolacin"/>
    <property type="match status" value="1"/>
</dbReference>
<dbReference type="SUPFAM" id="SSF57038">
    <property type="entry name" value="Cyclotides"/>
    <property type="match status" value="1"/>
</dbReference>
<dbReference type="PROSITE" id="PS51052">
    <property type="entry name" value="CYCLOTIDE"/>
    <property type="match status" value="1"/>
</dbReference>
<dbReference type="PROSITE" id="PS60008">
    <property type="entry name" value="CYCLOTIDE_BRACELET"/>
    <property type="match status" value="1"/>
</dbReference>
<comment type="function">
    <text>Probably participates in a plant defense mechanism. Has antibiotic activity. Inhibits the cytopathic effects and replication of the human immunodeficiency virus. Active against both Gram-positive and Gram-negative bacteria.</text>
</comment>
<comment type="domain">
    <text>The presence of a 'disulfide through disulfide knot' structurally defines this protein as a knottin.</text>
</comment>
<comment type="PTM">
    <text>This is a cyclic peptide.</text>
</comment>
<comment type="mass spectrometry" mass="3284.7" method="FAB" evidence="3"/>
<comment type="similarity">
    <text evidence="1">Belongs to the cyclotide family. Bracelet subfamily.</text>
</comment>
<comment type="caution">
    <text evidence="4">This peptide is cyclic. The start position was chosen by similarity to OAK1 (kalata-B1) for which the DNA sequence is known.</text>
</comment>
<accession>P56879</accession>
<accession>P82255</accession>
<proteinExistence type="evidence at protein level"/>
<feature type="peptide" id="PRO_0000044696" description="Circulin-B">
    <location>
        <begin position="1"/>
        <end position="31"/>
    </location>
</feature>
<feature type="disulfide bond" evidence="1 2">
    <location>
        <begin position="5"/>
        <end position="21"/>
    </location>
</feature>
<feature type="disulfide bond" evidence="1 2">
    <location>
        <begin position="9"/>
        <end position="23"/>
    </location>
</feature>
<feature type="disulfide bond" evidence="1 2">
    <location>
        <begin position="14"/>
        <end position="28"/>
    </location>
</feature>
<feature type="cross-link" description="Cyclopeptide (Gly-Asn)">
    <location>
        <begin position="1"/>
        <end position="31"/>
    </location>
</feature>
<feature type="strand" evidence="5">
    <location>
        <begin position="10"/>
        <end position="12"/>
    </location>
</feature>
<feature type="turn" evidence="5">
    <location>
        <begin position="16"/>
        <end position="20"/>
    </location>
</feature>
<feature type="strand" evidence="5">
    <location>
        <begin position="22"/>
        <end position="24"/>
    </location>
</feature>
<feature type="strand" evidence="5">
    <location>
        <begin position="27"/>
        <end position="30"/>
    </location>
</feature>
<evidence type="ECO:0000255" key="1">
    <source>
        <dbReference type="PROSITE-ProRule" id="PRU00395"/>
    </source>
</evidence>
<evidence type="ECO:0000269" key="2">
    <source>
    </source>
</evidence>
<evidence type="ECO:0000269" key="3">
    <source ref="2"/>
</evidence>
<evidence type="ECO:0000305" key="4"/>
<evidence type="ECO:0007829" key="5">
    <source>
        <dbReference type="PDB" id="2ERI"/>
    </source>
</evidence>
<organism>
    <name type="scientific">Chassalia parviflora</name>
    <dbReference type="NCBI Taxonomy" id="58431"/>
    <lineage>
        <taxon>Eukaryota</taxon>
        <taxon>Viridiplantae</taxon>
        <taxon>Streptophyta</taxon>
        <taxon>Embryophyta</taxon>
        <taxon>Tracheophyta</taxon>
        <taxon>Spermatophyta</taxon>
        <taxon>Magnoliopsida</taxon>
        <taxon>eudicotyledons</taxon>
        <taxon>Gunneridae</taxon>
        <taxon>Pentapetalae</taxon>
        <taxon>asterids</taxon>
        <taxon>lamiids</taxon>
        <taxon>Gentianales</taxon>
        <taxon>Rubiaceae</taxon>
        <taxon>Rubioideae</taxon>
        <taxon>Palicoureeae</taxon>
        <taxon>Chassalia</taxon>
    </lineage>
</organism>
<name>CIRB_CHAPA</name>
<reference key="1">
    <citation type="journal article" date="1968" name="Experientia">
        <title>Chemical structure of circulin B.</title>
        <authorList>
            <person name="Hayashi K."/>
            <person name="Suketa Y."/>
            <person name="Suzuki T."/>
        </authorList>
    </citation>
    <scope>PROTEIN SEQUENCE</scope>
</reference>
<reference key="2">
    <citation type="journal article" date="1994" name="J. Am. Chem. Soc.">
        <title>Circulins A and B: novel HIV-inhibitor macrocyclic peptide from tropical tree Chassalia parvifolia.</title>
        <authorList>
            <person name="Gustafson K.R."/>
            <person name="Sowder R.C. II"/>
            <person name="Henderson L.E."/>
            <person name="Parson I.C."/>
            <person name="Kashman Y."/>
            <person name="Cardellina J.H. Jr."/>
            <person name="McMahon J.B."/>
            <person name="Buckheit R.W. Jr."/>
            <person name="Pannell L.K."/>
            <person name="Boyd M.R."/>
        </authorList>
    </citation>
    <scope>PROTEIN SEQUENCE</scope>
    <scope>MASS SPECTROMETRY</scope>
</reference>
<reference key="3">
    <citation type="journal article" date="1996" name="Biochem. Biophys. Res. Commun.">
        <title>Analysis of the disulfide linkage pattern in circulin A and B, HIV-inhibitory macrocyclic peptides.</title>
        <authorList>
            <person name="Derua R."/>
            <person name="Gustafson K.R."/>
            <person name="Pannell L.K."/>
        </authorList>
    </citation>
    <scope>DISULFIDE BONDS</scope>
</reference>
<reference key="4">
    <citation type="journal article" date="1999" name="Proc. Natl. Acad. Sci. U.S.A.">
        <title>An unusual structural motif of antimicrobial peptides containing end-to-end macrocycle and cystine-knot disulfides.</title>
        <authorList>
            <person name="Tam J.P."/>
            <person name="Lu Y.-A."/>
            <person name="Yang J.-L."/>
            <person name="Chiu K.-W."/>
        </authorList>
    </citation>
    <scope>SYNTHESIS</scope>
    <scope>ANTIBACTERIAL ACTIVITY</scope>
</reference>
<reference key="5">
    <citation type="journal article" date="2005" name="Int. J. Pept. Protein Res.">
        <title>Structure of circulin B and implications for antimicrobial activity of the cyclotides.</title>
        <authorList>
            <person name="Koltay A."/>
            <person name="Daly N.L."/>
            <person name="Gustafson K.R."/>
            <person name="Craik D.J."/>
        </authorList>
    </citation>
    <scope>STRUCTURE BY NMR</scope>
</reference>
<sequence length="31" mass="3308">GVIPCGESCVFIPCISTLLGCSCKNKVCYRN</sequence>
<protein>
    <recommendedName>
        <fullName>Circulin-B</fullName>
        <shortName>CIRB</shortName>
    </recommendedName>
</protein>
<keyword id="KW-0002">3D-structure</keyword>
<keyword id="KW-0044">Antibiotic</keyword>
<keyword id="KW-0929">Antimicrobial</keyword>
<keyword id="KW-0903">Direct protein sequencing</keyword>
<keyword id="KW-1015">Disulfide bond</keyword>
<keyword id="KW-0960">Knottin</keyword>
<keyword id="KW-0611">Plant defense</keyword>